<evidence type="ECO:0000255" key="1">
    <source>
        <dbReference type="HAMAP-Rule" id="MF_00294"/>
    </source>
</evidence>
<evidence type="ECO:0000305" key="2"/>
<dbReference type="EMBL" id="CP000885">
    <property type="protein sequence ID" value="ABX44043.1"/>
    <property type="molecule type" value="Genomic_DNA"/>
</dbReference>
<dbReference type="SMR" id="A9KJM3"/>
<dbReference type="STRING" id="357809.Cphy_3696"/>
<dbReference type="KEGG" id="cpy:Cphy_3696"/>
<dbReference type="eggNOG" id="COG0267">
    <property type="taxonomic scope" value="Bacteria"/>
</dbReference>
<dbReference type="HOGENOM" id="CLU_190949_0_2_9"/>
<dbReference type="OrthoDB" id="9801333at2"/>
<dbReference type="Proteomes" id="UP000000370">
    <property type="component" value="Chromosome"/>
</dbReference>
<dbReference type="GO" id="GO:0005737">
    <property type="term" value="C:cytoplasm"/>
    <property type="evidence" value="ECO:0007669"/>
    <property type="project" value="UniProtKB-ARBA"/>
</dbReference>
<dbReference type="GO" id="GO:1990904">
    <property type="term" value="C:ribonucleoprotein complex"/>
    <property type="evidence" value="ECO:0007669"/>
    <property type="project" value="UniProtKB-KW"/>
</dbReference>
<dbReference type="GO" id="GO:0005840">
    <property type="term" value="C:ribosome"/>
    <property type="evidence" value="ECO:0007669"/>
    <property type="project" value="UniProtKB-KW"/>
</dbReference>
<dbReference type="GO" id="GO:0003735">
    <property type="term" value="F:structural constituent of ribosome"/>
    <property type="evidence" value="ECO:0007669"/>
    <property type="project" value="InterPro"/>
</dbReference>
<dbReference type="GO" id="GO:0006412">
    <property type="term" value="P:translation"/>
    <property type="evidence" value="ECO:0007669"/>
    <property type="project" value="UniProtKB-UniRule"/>
</dbReference>
<dbReference type="Gene3D" id="2.20.28.120">
    <property type="entry name" value="Ribosomal protein L33"/>
    <property type="match status" value="1"/>
</dbReference>
<dbReference type="HAMAP" id="MF_00294">
    <property type="entry name" value="Ribosomal_bL33"/>
    <property type="match status" value="1"/>
</dbReference>
<dbReference type="InterPro" id="IPR001705">
    <property type="entry name" value="Ribosomal_bL33"/>
</dbReference>
<dbReference type="InterPro" id="IPR038584">
    <property type="entry name" value="Ribosomal_bL33_sf"/>
</dbReference>
<dbReference type="InterPro" id="IPR011332">
    <property type="entry name" value="Ribosomal_zn-bd"/>
</dbReference>
<dbReference type="NCBIfam" id="NF001764">
    <property type="entry name" value="PRK00504.1"/>
    <property type="match status" value="1"/>
</dbReference>
<dbReference type="NCBIfam" id="NF001860">
    <property type="entry name" value="PRK00595.1"/>
    <property type="match status" value="1"/>
</dbReference>
<dbReference type="NCBIfam" id="TIGR01023">
    <property type="entry name" value="rpmG_bact"/>
    <property type="match status" value="1"/>
</dbReference>
<dbReference type="PANTHER" id="PTHR43168">
    <property type="entry name" value="50S RIBOSOMAL PROTEIN L33, CHLOROPLASTIC"/>
    <property type="match status" value="1"/>
</dbReference>
<dbReference type="PANTHER" id="PTHR43168:SF2">
    <property type="entry name" value="LARGE RIBOSOMAL SUBUNIT PROTEIN BL33C"/>
    <property type="match status" value="1"/>
</dbReference>
<dbReference type="Pfam" id="PF00471">
    <property type="entry name" value="Ribosomal_L33"/>
    <property type="match status" value="1"/>
</dbReference>
<dbReference type="SUPFAM" id="SSF57829">
    <property type="entry name" value="Zn-binding ribosomal proteins"/>
    <property type="match status" value="1"/>
</dbReference>
<name>RL33_LACP7</name>
<reference key="1">
    <citation type="submission" date="2007-11" db="EMBL/GenBank/DDBJ databases">
        <title>Complete genome sequence of Clostridium phytofermentans ISDg.</title>
        <authorList>
            <person name="Leschine S.B."/>
            <person name="Warnick T.A."/>
            <person name="Blanchard J.L."/>
            <person name="Schnell D.J."/>
            <person name="Petit E.L."/>
            <person name="LaTouf W.G."/>
            <person name="Copeland A."/>
            <person name="Lucas S."/>
            <person name="Lapidus A."/>
            <person name="Barry K."/>
            <person name="Glavina del Rio T."/>
            <person name="Dalin E."/>
            <person name="Tice H."/>
            <person name="Pitluck S."/>
            <person name="Kiss H."/>
            <person name="Brettin T."/>
            <person name="Bruce D."/>
            <person name="Detter J.C."/>
            <person name="Han C."/>
            <person name="Kuske C."/>
            <person name="Schmutz J."/>
            <person name="Larimer F."/>
            <person name="Land M."/>
            <person name="Hauser L."/>
            <person name="Kyrpides N."/>
            <person name="Kim E.A."/>
            <person name="Richardson P."/>
        </authorList>
    </citation>
    <scope>NUCLEOTIDE SEQUENCE [LARGE SCALE GENOMIC DNA]</scope>
    <source>
        <strain>ATCC 700394 / DSM 18823 / ISDg</strain>
    </source>
</reference>
<keyword id="KW-1185">Reference proteome</keyword>
<keyword id="KW-0687">Ribonucleoprotein</keyword>
<keyword id="KW-0689">Ribosomal protein</keyword>
<comment type="similarity">
    <text evidence="1">Belongs to the bacterial ribosomal protein bL33 family.</text>
</comment>
<protein>
    <recommendedName>
        <fullName evidence="1">Large ribosomal subunit protein bL33</fullName>
    </recommendedName>
    <alternativeName>
        <fullName evidence="2">50S ribosomal protein L33</fullName>
    </alternativeName>
</protein>
<proteinExistence type="inferred from homology"/>
<organism>
    <name type="scientific">Lachnoclostridium phytofermentans (strain ATCC 700394 / DSM 18823 / ISDg)</name>
    <name type="common">Clostridium phytofermentans</name>
    <dbReference type="NCBI Taxonomy" id="357809"/>
    <lineage>
        <taxon>Bacteria</taxon>
        <taxon>Bacillati</taxon>
        <taxon>Bacillota</taxon>
        <taxon>Clostridia</taxon>
        <taxon>Lachnospirales</taxon>
        <taxon>Lachnospiraceae</taxon>
    </lineage>
</organism>
<feature type="chain" id="PRO_0000356441" description="Large ribosomal subunit protein bL33">
    <location>
        <begin position="1"/>
        <end position="49"/>
    </location>
</feature>
<sequence length="49" mass="5944">MRVKITLACTECKQRNYNTTKEKKNHPDRMETKKFCKFCKSHTLHKETK</sequence>
<accession>A9KJM3</accession>
<gene>
    <name evidence="1" type="primary">rpmG</name>
    <name type="ordered locus">Cphy_3696</name>
</gene>